<feature type="chain" id="PRO_0000077905" description="Uncharacterized protein HI_0279">
    <location>
        <begin position="1"/>
        <end position="98"/>
    </location>
</feature>
<feature type="domain" description="MOSC" evidence="1">
    <location>
        <begin position="30"/>
        <end position="98"/>
    </location>
</feature>
<organism>
    <name type="scientific">Haemophilus influenzae (strain ATCC 51907 / DSM 11121 / KW20 / Rd)</name>
    <dbReference type="NCBI Taxonomy" id="71421"/>
    <lineage>
        <taxon>Bacteria</taxon>
        <taxon>Pseudomonadati</taxon>
        <taxon>Pseudomonadota</taxon>
        <taxon>Gammaproteobacteria</taxon>
        <taxon>Pasteurellales</taxon>
        <taxon>Pasteurellaceae</taxon>
        <taxon>Haemophilus</taxon>
    </lineage>
</organism>
<keyword id="KW-1185">Reference proteome</keyword>
<name>Y279_HAEIN</name>
<gene>
    <name type="ordered locus">HI_0279</name>
</gene>
<reference key="1">
    <citation type="journal article" date="1995" name="Science">
        <title>Whole-genome random sequencing and assembly of Haemophilus influenzae Rd.</title>
        <authorList>
            <person name="Fleischmann R.D."/>
            <person name="Adams M.D."/>
            <person name="White O."/>
            <person name="Clayton R.A."/>
            <person name="Kirkness E.F."/>
            <person name="Kerlavage A.R."/>
            <person name="Bult C.J."/>
            <person name="Tomb J.-F."/>
            <person name="Dougherty B.A."/>
            <person name="Merrick J.M."/>
            <person name="McKenney K."/>
            <person name="Sutton G.G."/>
            <person name="FitzHugh W."/>
            <person name="Fields C.A."/>
            <person name="Gocayne J.D."/>
            <person name="Scott J.D."/>
            <person name="Shirley R."/>
            <person name="Liu L.-I."/>
            <person name="Glodek A."/>
            <person name="Kelley J.M."/>
            <person name="Weidman J.F."/>
            <person name="Phillips C.A."/>
            <person name="Spriggs T."/>
            <person name="Hedblom E."/>
            <person name="Cotton M.D."/>
            <person name="Utterback T.R."/>
            <person name="Hanna M.C."/>
            <person name="Nguyen D.T."/>
            <person name="Saudek D.M."/>
            <person name="Brandon R.C."/>
            <person name="Fine L.D."/>
            <person name="Fritchman J.L."/>
            <person name="Fuhrmann J.L."/>
            <person name="Geoghagen N.S.M."/>
            <person name="Gnehm C.L."/>
            <person name="McDonald L.A."/>
            <person name="Small K.V."/>
            <person name="Fraser C.M."/>
            <person name="Smith H.O."/>
            <person name="Venter J.C."/>
        </authorList>
    </citation>
    <scope>NUCLEOTIDE SEQUENCE [LARGE SCALE GENOMIC DNA]</scope>
    <source>
        <strain>ATCC 51907 / DSM 11121 / KW20 / Rd</strain>
    </source>
</reference>
<sequence>MNAKILVIKVGQVETLTFSDGSQYESAIRKKVVPSVKIHSLGAEGNDVGLKKHHGGVDKALFFMSADSFNELNALLNKDFSLYGYCDIRRKFCRVRLE</sequence>
<dbReference type="EMBL" id="L42023">
    <property type="protein sequence ID" value="AAC21951.1"/>
    <property type="molecule type" value="Genomic_DNA"/>
</dbReference>
<dbReference type="PIR" id="D64005">
    <property type="entry name" value="D64005"/>
</dbReference>
<dbReference type="STRING" id="71421.HI_0279"/>
<dbReference type="EnsemblBacteria" id="AAC21951">
    <property type="protein sequence ID" value="AAC21951"/>
    <property type="gene ID" value="HI_0279"/>
</dbReference>
<dbReference type="KEGG" id="hin:HI_0279"/>
<dbReference type="eggNOG" id="COG2258">
    <property type="taxonomic scope" value="Bacteria"/>
</dbReference>
<dbReference type="HOGENOM" id="CLU_2329824_0_0_6"/>
<dbReference type="Proteomes" id="UP000000579">
    <property type="component" value="Chromosome"/>
</dbReference>
<dbReference type="GO" id="GO:0005829">
    <property type="term" value="C:cytosol"/>
    <property type="evidence" value="ECO:0000318"/>
    <property type="project" value="GO_Central"/>
</dbReference>
<dbReference type="GO" id="GO:0030151">
    <property type="term" value="F:molybdenum ion binding"/>
    <property type="evidence" value="ECO:0007669"/>
    <property type="project" value="InterPro"/>
</dbReference>
<dbReference type="GO" id="GO:0016491">
    <property type="term" value="F:oxidoreductase activity"/>
    <property type="evidence" value="ECO:0000318"/>
    <property type="project" value="GO_Central"/>
</dbReference>
<dbReference type="GO" id="GO:0030170">
    <property type="term" value="F:pyridoxal phosphate binding"/>
    <property type="evidence" value="ECO:0007669"/>
    <property type="project" value="InterPro"/>
</dbReference>
<dbReference type="GO" id="GO:0009407">
    <property type="term" value="P:toxin catabolic process"/>
    <property type="evidence" value="ECO:0000318"/>
    <property type="project" value="GO_Central"/>
</dbReference>
<dbReference type="Gene3D" id="2.40.33.20">
    <property type="entry name" value="PK beta-barrel domain-like"/>
    <property type="match status" value="1"/>
</dbReference>
<dbReference type="InterPro" id="IPR052353">
    <property type="entry name" value="Benzoxazolinone_Detox_Enz"/>
</dbReference>
<dbReference type="InterPro" id="IPR005302">
    <property type="entry name" value="MoCF_Sase_C"/>
</dbReference>
<dbReference type="InterPro" id="IPR011037">
    <property type="entry name" value="Pyrv_Knase-like_insert_dom_sf"/>
</dbReference>
<dbReference type="PANTHER" id="PTHR30212">
    <property type="entry name" value="PROTEIN YIIM"/>
    <property type="match status" value="1"/>
</dbReference>
<dbReference type="PANTHER" id="PTHR30212:SF2">
    <property type="entry name" value="PROTEIN YIIM"/>
    <property type="match status" value="1"/>
</dbReference>
<dbReference type="SUPFAM" id="SSF50800">
    <property type="entry name" value="PK beta-barrel domain-like"/>
    <property type="match status" value="1"/>
</dbReference>
<dbReference type="PROSITE" id="PS51340">
    <property type="entry name" value="MOSC"/>
    <property type="match status" value="1"/>
</dbReference>
<evidence type="ECO:0000255" key="1">
    <source>
        <dbReference type="PROSITE-ProRule" id="PRU00670"/>
    </source>
</evidence>
<accession>P43977</accession>
<proteinExistence type="predicted"/>
<protein>
    <recommendedName>
        <fullName>Uncharacterized protein HI_0279</fullName>
    </recommendedName>
</protein>